<name>TAM_BRUSI</name>
<accession>B0CHP1</accession>
<gene>
    <name evidence="1" type="primary">tam</name>
    <name type="ordered locus">BSUIS_A1508</name>
</gene>
<comment type="function">
    <text evidence="1">Catalyzes the S-adenosylmethionine monomethyl esterification of trans-aconitate.</text>
</comment>
<comment type="catalytic activity">
    <reaction evidence="1">
        <text>trans-aconitate + S-adenosyl-L-methionine = (E)-3-(methoxycarbonyl)pent-2-enedioate + S-adenosyl-L-homocysteine</text>
        <dbReference type="Rhea" id="RHEA:14969"/>
        <dbReference type="ChEBI" id="CHEBI:15708"/>
        <dbReference type="ChEBI" id="CHEBI:57470"/>
        <dbReference type="ChEBI" id="CHEBI:57856"/>
        <dbReference type="ChEBI" id="CHEBI:59789"/>
        <dbReference type="EC" id="2.1.1.144"/>
    </reaction>
</comment>
<comment type="subcellular location">
    <subcellularLocation>
        <location evidence="1">Cytoplasm</location>
    </subcellularLocation>
</comment>
<comment type="similarity">
    <text evidence="1">Belongs to the methyltransferase superfamily. Tam family.</text>
</comment>
<feature type="chain" id="PRO_1000082272" description="Trans-aconitate 2-methyltransferase">
    <location>
        <begin position="1"/>
        <end position="255"/>
    </location>
</feature>
<organism>
    <name type="scientific">Brucella suis (strain ATCC 23445 / NCTC 10510)</name>
    <dbReference type="NCBI Taxonomy" id="470137"/>
    <lineage>
        <taxon>Bacteria</taxon>
        <taxon>Pseudomonadati</taxon>
        <taxon>Pseudomonadota</taxon>
        <taxon>Alphaproteobacteria</taxon>
        <taxon>Hyphomicrobiales</taxon>
        <taxon>Brucellaceae</taxon>
        <taxon>Brucella/Ochrobactrum group</taxon>
        <taxon>Brucella</taxon>
    </lineage>
</organism>
<dbReference type="EC" id="2.1.1.144" evidence="1"/>
<dbReference type="EMBL" id="CP000911">
    <property type="protein sequence ID" value="ABY38542.1"/>
    <property type="molecule type" value="Genomic_DNA"/>
</dbReference>
<dbReference type="RefSeq" id="WP_004691577.1">
    <property type="nucleotide sequence ID" value="NC_010169.1"/>
</dbReference>
<dbReference type="SMR" id="B0CHP1"/>
<dbReference type="GeneID" id="55591104"/>
<dbReference type="KEGG" id="bmt:BSUIS_A1508"/>
<dbReference type="HOGENOM" id="CLU_037990_5_2_5"/>
<dbReference type="Proteomes" id="UP000008545">
    <property type="component" value="Chromosome I"/>
</dbReference>
<dbReference type="GO" id="GO:0005737">
    <property type="term" value="C:cytoplasm"/>
    <property type="evidence" value="ECO:0007669"/>
    <property type="project" value="UniProtKB-SubCell"/>
</dbReference>
<dbReference type="GO" id="GO:0030798">
    <property type="term" value="F:trans-aconitate 2-methyltransferase activity"/>
    <property type="evidence" value="ECO:0007669"/>
    <property type="project" value="UniProtKB-UniRule"/>
</dbReference>
<dbReference type="GO" id="GO:0032259">
    <property type="term" value="P:methylation"/>
    <property type="evidence" value="ECO:0007669"/>
    <property type="project" value="UniProtKB-KW"/>
</dbReference>
<dbReference type="CDD" id="cd02440">
    <property type="entry name" value="AdoMet_MTases"/>
    <property type="match status" value="1"/>
</dbReference>
<dbReference type="Gene3D" id="1.10.150.290">
    <property type="entry name" value="S-adenosyl-L-methionine-dependent methyltransferases"/>
    <property type="match status" value="1"/>
</dbReference>
<dbReference type="Gene3D" id="3.40.50.150">
    <property type="entry name" value="Vaccinia Virus protein VP39"/>
    <property type="match status" value="1"/>
</dbReference>
<dbReference type="HAMAP" id="MF_00560">
    <property type="entry name" value="Tran_acon_Me_trans"/>
    <property type="match status" value="1"/>
</dbReference>
<dbReference type="InterPro" id="IPR041698">
    <property type="entry name" value="Methyltransf_25"/>
</dbReference>
<dbReference type="InterPro" id="IPR029063">
    <property type="entry name" value="SAM-dependent_MTases_sf"/>
</dbReference>
<dbReference type="InterPro" id="IPR023506">
    <property type="entry name" value="Trans-aconitate_MeTrfase"/>
</dbReference>
<dbReference type="InterPro" id="IPR023149">
    <property type="entry name" value="Trans_acon_MeTrfase_C"/>
</dbReference>
<dbReference type="NCBIfam" id="NF002463">
    <property type="entry name" value="PRK01683.1"/>
    <property type="match status" value="1"/>
</dbReference>
<dbReference type="PANTHER" id="PTHR43861:SF1">
    <property type="entry name" value="TRANS-ACONITATE 2-METHYLTRANSFERASE"/>
    <property type="match status" value="1"/>
</dbReference>
<dbReference type="PANTHER" id="PTHR43861">
    <property type="entry name" value="TRANS-ACONITATE 2-METHYLTRANSFERASE-RELATED"/>
    <property type="match status" value="1"/>
</dbReference>
<dbReference type="Pfam" id="PF13649">
    <property type="entry name" value="Methyltransf_25"/>
    <property type="match status" value="1"/>
</dbReference>
<dbReference type="SUPFAM" id="SSF53335">
    <property type="entry name" value="S-adenosyl-L-methionine-dependent methyltransferases"/>
    <property type="match status" value="1"/>
</dbReference>
<evidence type="ECO:0000255" key="1">
    <source>
        <dbReference type="HAMAP-Rule" id="MF_00560"/>
    </source>
</evidence>
<protein>
    <recommendedName>
        <fullName evidence="1">Trans-aconitate 2-methyltransferase</fullName>
        <ecNumber evidence="1">2.1.1.144</ecNumber>
    </recommendedName>
</protein>
<sequence>MKDWSAKQYLKFEDERSRPARDLLAQIPLSAPRKVVDIGCGPGNSTKLLVERWPDAQISGFDTSPDMIDTAKTHLPDVEFFISDAASFEPDAETDVLFSNAVFQWLPDHVEQLQRLLSLLQPGAFLAVQMPDNMGEQTHVGMRDVAKTAPFAMKIATKGRAALPPVATYYNAFADDAARIDIWHTIYNHPLAGVDAIVEWVKGTGLRPFLDPLDEQEQADYLKAYKARIAEHYPMTADGKVLLRFPRIFLVVQKK</sequence>
<proteinExistence type="inferred from homology"/>
<keyword id="KW-0963">Cytoplasm</keyword>
<keyword id="KW-0489">Methyltransferase</keyword>
<keyword id="KW-0949">S-adenosyl-L-methionine</keyword>
<keyword id="KW-0808">Transferase</keyword>
<reference key="1">
    <citation type="submission" date="2007-12" db="EMBL/GenBank/DDBJ databases">
        <title>Brucella suis ATCC 23445 whole genome shotgun sequencing project.</title>
        <authorList>
            <person name="Setubal J.C."/>
            <person name="Bowns C."/>
            <person name="Boyle S."/>
            <person name="Crasta O.R."/>
            <person name="Czar M.J."/>
            <person name="Dharmanolla C."/>
            <person name="Gillespie J.J."/>
            <person name="Kenyon R.W."/>
            <person name="Lu J."/>
            <person name="Mane S."/>
            <person name="Mohapatra S."/>
            <person name="Nagrani S."/>
            <person name="Purkayastha A."/>
            <person name="Rajasimha H.K."/>
            <person name="Shallom J.M."/>
            <person name="Shallom S."/>
            <person name="Shukla M."/>
            <person name="Snyder E.E."/>
            <person name="Sobral B.W."/>
            <person name="Wattam A.R."/>
            <person name="Will R."/>
            <person name="Williams K."/>
            <person name="Yoo H."/>
            <person name="Bruce D."/>
            <person name="Detter C."/>
            <person name="Munk C."/>
            <person name="Brettin T.S."/>
        </authorList>
    </citation>
    <scope>NUCLEOTIDE SEQUENCE [LARGE SCALE GENOMIC DNA]</scope>
    <source>
        <strain>ATCC 23445 / NCTC 10510</strain>
    </source>
</reference>